<organism>
    <name type="scientific">Zymomonas mobilis subsp. mobilis (strain ATCC 31821 / ZM4 / CP4)</name>
    <dbReference type="NCBI Taxonomy" id="264203"/>
    <lineage>
        <taxon>Bacteria</taxon>
        <taxon>Pseudomonadati</taxon>
        <taxon>Pseudomonadota</taxon>
        <taxon>Alphaproteobacteria</taxon>
        <taxon>Sphingomonadales</taxon>
        <taxon>Zymomonadaceae</taxon>
        <taxon>Zymomonas</taxon>
    </lineage>
</organism>
<reference key="1">
    <citation type="journal article" date="2005" name="Nat. Biotechnol.">
        <title>The genome sequence of the ethanologenic bacterium Zymomonas mobilis ZM4.</title>
        <authorList>
            <person name="Seo J.-S."/>
            <person name="Chong H."/>
            <person name="Park H.S."/>
            <person name="Yoon K.-O."/>
            <person name="Jung C."/>
            <person name="Kim J.J."/>
            <person name="Hong J.H."/>
            <person name="Kim H."/>
            <person name="Kim J.-H."/>
            <person name="Kil J.-I."/>
            <person name="Park C.J."/>
            <person name="Oh H.-M."/>
            <person name="Lee J.-S."/>
            <person name="Jin S.-J."/>
            <person name="Um H.-W."/>
            <person name="Lee H.-J."/>
            <person name="Oh S.-J."/>
            <person name="Kim J.Y."/>
            <person name="Kang H.L."/>
            <person name="Lee S.Y."/>
            <person name="Lee K.J."/>
            <person name="Kang H.S."/>
        </authorList>
    </citation>
    <scope>NUCLEOTIDE SEQUENCE [LARGE SCALE GENOMIC DNA]</scope>
    <source>
        <strain>ATCC 31821 / ZM4 / CP4</strain>
    </source>
</reference>
<proteinExistence type="inferred from homology"/>
<dbReference type="EC" id="2.7.1.23" evidence="1"/>
<dbReference type="EMBL" id="AE008692">
    <property type="protein sequence ID" value="AAV89953.1"/>
    <property type="molecule type" value="Genomic_DNA"/>
</dbReference>
<dbReference type="RefSeq" id="WP_011241130.1">
    <property type="nucleotide sequence ID" value="NZ_CP035711.1"/>
</dbReference>
<dbReference type="SMR" id="Q5NMV7"/>
<dbReference type="STRING" id="264203.ZMO1329"/>
<dbReference type="KEGG" id="zmo:ZMO1329"/>
<dbReference type="eggNOG" id="COG0061">
    <property type="taxonomic scope" value="Bacteria"/>
</dbReference>
<dbReference type="HOGENOM" id="CLU_073319_0_0_5"/>
<dbReference type="Proteomes" id="UP000001173">
    <property type="component" value="Chromosome"/>
</dbReference>
<dbReference type="GO" id="GO:0005737">
    <property type="term" value="C:cytoplasm"/>
    <property type="evidence" value="ECO:0007669"/>
    <property type="project" value="UniProtKB-SubCell"/>
</dbReference>
<dbReference type="GO" id="GO:0005524">
    <property type="term" value="F:ATP binding"/>
    <property type="evidence" value="ECO:0007669"/>
    <property type="project" value="UniProtKB-KW"/>
</dbReference>
<dbReference type="GO" id="GO:0046872">
    <property type="term" value="F:metal ion binding"/>
    <property type="evidence" value="ECO:0007669"/>
    <property type="project" value="UniProtKB-UniRule"/>
</dbReference>
<dbReference type="GO" id="GO:0051287">
    <property type="term" value="F:NAD binding"/>
    <property type="evidence" value="ECO:0007669"/>
    <property type="project" value="UniProtKB-ARBA"/>
</dbReference>
<dbReference type="GO" id="GO:0003951">
    <property type="term" value="F:NAD+ kinase activity"/>
    <property type="evidence" value="ECO:0007669"/>
    <property type="project" value="UniProtKB-UniRule"/>
</dbReference>
<dbReference type="GO" id="GO:0019674">
    <property type="term" value="P:NAD metabolic process"/>
    <property type="evidence" value="ECO:0007669"/>
    <property type="project" value="InterPro"/>
</dbReference>
<dbReference type="GO" id="GO:0006741">
    <property type="term" value="P:NADP biosynthetic process"/>
    <property type="evidence" value="ECO:0007669"/>
    <property type="project" value="UniProtKB-UniRule"/>
</dbReference>
<dbReference type="Gene3D" id="3.40.50.10330">
    <property type="entry name" value="Probable inorganic polyphosphate/atp-NAD kinase, domain 1"/>
    <property type="match status" value="1"/>
</dbReference>
<dbReference type="Gene3D" id="2.60.200.30">
    <property type="entry name" value="Probable inorganic polyphosphate/atp-NAD kinase, domain 2"/>
    <property type="match status" value="1"/>
</dbReference>
<dbReference type="HAMAP" id="MF_00361">
    <property type="entry name" value="NAD_kinase"/>
    <property type="match status" value="1"/>
</dbReference>
<dbReference type="InterPro" id="IPR017438">
    <property type="entry name" value="ATP-NAD_kinase_N"/>
</dbReference>
<dbReference type="InterPro" id="IPR017437">
    <property type="entry name" value="ATP-NAD_kinase_PpnK-typ_C"/>
</dbReference>
<dbReference type="InterPro" id="IPR016064">
    <property type="entry name" value="NAD/diacylglycerol_kinase_sf"/>
</dbReference>
<dbReference type="InterPro" id="IPR002504">
    <property type="entry name" value="NADK"/>
</dbReference>
<dbReference type="NCBIfam" id="NF003406">
    <property type="entry name" value="PRK04761.1"/>
    <property type="match status" value="1"/>
</dbReference>
<dbReference type="PANTHER" id="PTHR20275">
    <property type="entry name" value="NAD KINASE"/>
    <property type="match status" value="1"/>
</dbReference>
<dbReference type="PANTHER" id="PTHR20275:SF0">
    <property type="entry name" value="NAD KINASE"/>
    <property type="match status" value="1"/>
</dbReference>
<dbReference type="Pfam" id="PF01513">
    <property type="entry name" value="NAD_kinase"/>
    <property type="match status" value="1"/>
</dbReference>
<dbReference type="Pfam" id="PF20143">
    <property type="entry name" value="NAD_kinase_C"/>
    <property type="match status" value="1"/>
</dbReference>
<dbReference type="SUPFAM" id="SSF111331">
    <property type="entry name" value="NAD kinase/diacylglycerol kinase-like"/>
    <property type="match status" value="1"/>
</dbReference>
<feature type="chain" id="PRO_0000229716" description="NAD kinase">
    <location>
        <begin position="1"/>
        <end position="258"/>
    </location>
</feature>
<feature type="active site" description="Proton acceptor" evidence="1">
    <location>
        <position position="44"/>
    </location>
</feature>
<feature type="binding site" evidence="1">
    <location>
        <begin position="44"/>
        <end position="45"/>
    </location>
    <ligand>
        <name>NAD(+)</name>
        <dbReference type="ChEBI" id="CHEBI:57540"/>
    </ligand>
</feature>
<feature type="binding site" evidence="1">
    <location>
        <begin position="116"/>
        <end position="117"/>
    </location>
    <ligand>
        <name>NAD(+)</name>
        <dbReference type="ChEBI" id="CHEBI:57540"/>
    </ligand>
</feature>
<feature type="binding site" evidence="1">
    <location>
        <position position="146"/>
    </location>
    <ligand>
        <name>NAD(+)</name>
        <dbReference type="ChEBI" id="CHEBI:57540"/>
    </ligand>
</feature>
<feature type="binding site" evidence="1">
    <location>
        <position position="154"/>
    </location>
    <ligand>
        <name>NAD(+)</name>
        <dbReference type="ChEBI" id="CHEBI:57540"/>
    </ligand>
</feature>
<feature type="binding site" evidence="1">
    <location>
        <begin position="157"/>
        <end position="162"/>
    </location>
    <ligand>
        <name>NAD(+)</name>
        <dbReference type="ChEBI" id="CHEBI:57540"/>
    </ligand>
</feature>
<keyword id="KW-0067">ATP-binding</keyword>
<keyword id="KW-0963">Cytoplasm</keyword>
<keyword id="KW-0418">Kinase</keyword>
<keyword id="KW-0520">NAD</keyword>
<keyword id="KW-0521">NADP</keyword>
<keyword id="KW-0547">Nucleotide-binding</keyword>
<keyword id="KW-1185">Reference proteome</keyword>
<keyword id="KW-0808">Transferase</keyword>
<name>NADK_ZYMMO</name>
<gene>
    <name evidence="1" type="primary">nadK</name>
    <name type="ordered locus">ZMO1329</name>
</gene>
<evidence type="ECO:0000255" key="1">
    <source>
        <dbReference type="HAMAP-Rule" id="MF_00361"/>
    </source>
</evidence>
<protein>
    <recommendedName>
        <fullName evidence="1">NAD kinase</fullName>
        <ecNumber evidence="1">2.7.1.23</ecNumber>
    </recommendedName>
    <alternativeName>
        <fullName evidence="1">ATP-dependent NAD kinase</fullName>
    </alternativeName>
</protein>
<accession>Q5NMV7</accession>
<sequence length="258" mass="29048">MKFNRMTLIASPTPKAQKAAEELKKLYQWYPLEEADVIIALGGDGFMLQTLHHLLDNSFNLPVFGMNLGTVGFLMNEWRPSNLLRRLIRAKQFTVYPLRMDGQTVSGEQKIYRAINEVSMLRETRQTAHLEISVDGRIVLPELVSDGVLVATPAGSTAYNLSADGPILPFDSGMLALTPISPFRPRRWRGAIVPDGSIIDMRVVDPDKRPMSAVADQRELREIANVTITLDRTTPLHLLFDPNHALDDRIAREQFRLC</sequence>
<comment type="function">
    <text evidence="1">Involved in the regulation of the intracellular balance of NAD and NADP, and is a key enzyme in the biosynthesis of NADP. Catalyzes specifically the phosphorylation on 2'-hydroxyl of the adenosine moiety of NAD to yield NADP.</text>
</comment>
<comment type="catalytic activity">
    <reaction evidence="1">
        <text>NAD(+) + ATP = ADP + NADP(+) + H(+)</text>
        <dbReference type="Rhea" id="RHEA:18629"/>
        <dbReference type="ChEBI" id="CHEBI:15378"/>
        <dbReference type="ChEBI" id="CHEBI:30616"/>
        <dbReference type="ChEBI" id="CHEBI:57540"/>
        <dbReference type="ChEBI" id="CHEBI:58349"/>
        <dbReference type="ChEBI" id="CHEBI:456216"/>
        <dbReference type="EC" id="2.7.1.23"/>
    </reaction>
</comment>
<comment type="cofactor">
    <cofactor evidence="1">
        <name>a divalent metal cation</name>
        <dbReference type="ChEBI" id="CHEBI:60240"/>
    </cofactor>
</comment>
<comment type="subcellular location">
    <subcellularLocation>
        <location evidence="1">Cytoplasm</location>
    </subcellularLocation>
</comment>
<comment type="similarity">
    <text evidence="1">Belongs to the NAD kinase family.</text>
</comment>